<gene>
    <name evidence="1" type="primary">truA</name>
    <name type="ordered locus">Pisl_1280</name>
</gene>
<evidence type="ECO:0000255" key="1">
    <source>
        <dbReference type="HAMAP-Rule" id="MF_00171"/>
    </source>
</evidence>
<name>TRUA_PYRIL</name>
<reference key="1">
    <citation type="submission" date="2006-12" db="EMBL/GenBank/DDBJ databases">
        <title>Complete sequence of Pyrobaculum islandicum DSM 4184.</title>
        <authorList>
            <person name="Copeland A."/>
            <person name="Lucas S."/>
            <person name="Lapidus A."/>
            <person name="Barry K."/>
            <person name="Detter J.C."/>
            <person name="Glavina del Rio T."/>
            <person name="Dalin E."/>
            <person name="Tice H."/>
            <person name="Pitluck S."/>
            <person name="Meincke L."/>
            <person name="Brettin T."/>
            <person name="Bruce D."/>
            <person name="Han C."/>
            <person name="Tapia R."/>
            <person name="Gilna P."/>
            <person name="Schmutz J."/>
            <person name="Larimer F."/>
            <person name="Land M."/>
            <person name="Hauser L."/>
            <person name="Kyrpides N."/>
            <person name="Mikhailova N."/>
            <person name="Cozen A.E."/>
            <person name="Fitz-Gibbon S.T."/>
            <person name="House C.H."/>
            <person name="Saltikov C."/>
            <person name="Lowe T."/>
            <person name="Richardson P."/>
        </authorList>
    </citation>
    <scope>NUCLEOTIDE SEQUENCE [LARGE SCALE GENOMIC DNA]</scope>
    <source>
        <strain>DSM 4184 / JCM 9189 / GEO3</strain>
    </source>
</reference>
<proteinExistence type="inferred from homology"/>
<accession>A1RU12</accession>
<feature type="chain" id="PRO_1000017146" description="tRNA pseudouridine synthase A">
    <location>
        <begin position="1"/>
        <end position="255"/>
    </location>
</feature>
<feature type="active site" description="Nucleophile" evidence="1">
    <location>
        <position position="43"/>
    </location>
</feature>
<feature type="binding site" evidence="1">
    <location>
        <position position="94"/>
    </location>
    <ligand>
        <name>substrate</name>
    </ligand>
</feature>
<dbReference type="EC" id="5.4.99.12" evidence="1"/>
<dbReference type="EMBL" id="CP000504">
    <property type="protein sequence ID" value="ABL88444.1"/>
    <property type="molecule type" value="Genomic_DNA"/>
</dbReference>
<dbReference type="RefSeq" id="WP_011763019.1">
    <property type="nucleotide sequence ID" value="NC_008701.1"/>
</dbReference>
<dbReference type="SMR" id="A1RU12"/>
<dbReference type="STRING" id="384616.Pisl_1280"/>
<dbReference type="GeneID" id="4617461"/>
<dbReference type="KEGG" id="pis:Pisl_1280"/>
<dbReference type="eggNOG" id="arCOG04449">
    <property type="taxonomic scope" value="Archaea"/>
</dbReference>
<dbReference type="HOGENOM" id="CLU_014673_4_2_2"/>
<dbReference type="OrthoDB" id="25720at2157"/>
<dbReference type="Proteomes" id="UP000002595">
    <property type="component" value="Chromosome"/>
</dbReference>
<dbReference type="GO" id="GO:0003723">
    <property type="term" value="F:RNA binding"/>
    <property type="evidence" value="ECO:0007669"/>
    <property type="project" value="InterPro"/>
</dbReference>
<dbReference type="GO" id="GO:0160147">
    <property type="term" value="F:tRNA pseudouridine(38-40) synthase activity"/>
    <property type="evidence" value="ECO:0007669"/>
    <property type="project" value="UniProtKB-EC"/>
</dbReference>
<dbReference type="GO" id="GO:0031119">
    <property type="term" value="P:tRNA pseudouridine synthesis"/>
    <property type="evidence" value="ECO:0007669"/>
    <property type="project" value="UniProtKB-UniRule"/>
</dbReference>
<dbReference type="Gene3D" id="3.30.70.660">
    <property type="entry name" value="Pseudouridine synthase I, catalytic domain, C-terminal subdomain"/>
    <property type="match status" value="1"/>
</dbReference>
<dbReference type="Gene3D" id="3.30.70.580">
    <property type="entry name" value="Pseudouridine synthase I, catalytic domain, N-terminal subdomain"/>
    <property type="match status" value="1"/>
</dbReference>
<dbReference type="HAMAP" id="MF_00171">
    <property type="entry name" value="TruA"/>
    <property type="match status" value="1"/>
</dbReference>
<dbReference type="InterPro" id="IPR020103">
    <property type="entry name" value="PsdUridine_synth_cat_dom_sf"/>
</dbReference>
<dbReference type="InterPro" id="IPR001406">
    <property type="entry name" value="PsdUridine_synth_TruA"/>
</dbReference>
<dbReference type="InterPro" id="IPR020097">
    <property type="entry name" value="PsdUridine_synth_TruA_a/b_dom"/>
</dbReference>
<dbReference type="InterPro" id="IPR020095">
    <property type="entry name" value="PsdUridine_synth_TruA_C"/>
</dbReference>
<dbReference type="InterPro" id="IPR020094">
    <property type="entry name" value="TruA/RsuA/RluB/E/F_N"/>
</dbReference>
<dbReference type="PANTHER" id="PTHR11142">
    <property type="entry name" value="PSEUDOURIDYLATE SYNTHASE"/>
    <property type="match status" value="1"/>
</dbReference>
<dbReference type="PANTHER" id="PTHR11142:SF0">
    <property type="entry name" value="TRNA PSEUDOURIDINE SYNTHASE-LIKE 1"/>
    <property type="match status" value="1"/>
</dbReference>
<dbReference type="Pfam" id="PF01416">
    <property type="entry name" value="PseudoU_synth_1"/>
    <property type="match status" value="1"/>
</dbReference>
<dbReference type="PIRSF" id="PIRSF001430">
    <property type="entry name" value="tRNA_psdUrid_synth"/>
    <property type="match status" value="1"/>
</dbReference>
<dbReference type="SUPFAM" id="SSF55120">
    <property type="entry name" value="Pseudouridine synthase"/>
    <property type="match status" value="1"/>
</dbReference>
<protein>
    <recommendedName>
        <fullName evidence="1">tRNA pseudouridine synthase A</fullName>
        <ecNumber evidence="1">5.4.99.12</ecNumber>
    </recommendedName>
    <alternativeName>
        <fullName evidence="1">tRNA pseudouridine(38-40) synthase</fullName>
    </alternativeName>
    <alternativeName>
        <fullName evidence="1">tRNA pseudouridylate synthase I</fullName>
    </alternativeName>
    <alternativeName>
        <fullName evidence="1">tRNA-uridine isomerase I</fullName>
    </alternativeName>
</protein>
<organism>
    <name type="scientific">Pyrobaculum islandicum (strain DSM 4184 / JCM 9189 / GEO3)</name>
    <dbReference type="NCBI Taxonomy" id="384616"/>
    <lineage>
        <taxon>Archaea</taxon>
        <taxon>Thermoproteota</taxon>
        <taxon>Thermoprotei</taxon>
        <taxon>Thermoproteales</taxon>
        <taxon>Thermoproteaceae</taxon>
        <taxon>Pyrobaculum</taxon>
    </lineage>
</organism>
<comment type="function">
    <text evidence="1">Formation of pseudouridine at positions 38, 39 and 40 in the anticodon stem and loop of transfer RNAs.</text>
</comment>
<comment type="catalytic activity">
    <reaction evidence="1">
        <text>uridine(38/39/40) in tRNA = pseudouridine(38/39/40) in tRNA</text>
        <dbReference type="Rhea" id="RHEA:22376"/>
        <dbReference type="Rhea" id="RHEA-COMP:10085"/>
        <dbReference type="Rhea" id="RHEA-COMP:10087"/>
        <dbReference type="ChEBI" id="CHEBI:65314"/>
        <dbReference type="ChEBI" id="CHEBI:65315"/>
        <dbReference type="EC" id="5.4.99.12"/>
    </reaction>
</comment>
<comment type="similarity">
    <text evidence="1">Belongs to the tRNA pseudouridine synthase TruA family.</text>
</comment>
<sequence>MPYLYRIAYDGTLFYGFTGHSRSLEPALKRVFGEILGRGSRTDPGVSAVANTVMVSQKLPIALVNSKLPRGVWAWAIAEVPQSFNPRRAKFRHYLYVAPHWGEDLGSMHEAAEVLAGTHDFASFIQRRGEKISTIATVMEIKVELRGDLIYMHFVGRGFKNKMIRKLAWAILAAGRGIFNIRDIRELLERPRPGVVPSAPAEGLVLLNIEYDVDFQIDYTALRSAYVYFLSKYRHAVAHAAALKAVGETLATWEQ</sequence>
<keyword id="KW-0413">Isomerase</keyword>
<keyword id="KW-0819">tRNA processing</keyword>